<sequence length="328" mass="37595">MPNYINYPSWLHPEVIQGIPITWYSLSYILIILISYKFIWYQIQSDNVDIKKEDYEIFMFSLVLGAILGGRLASTLVYDKSGIYYSNPWLILLPFDQHWNFTGFRGMAIHGGFLGAIIAPLITINTNLKNTNVQKYFLKLTDYGSIAFSSGYILGRLANFANAELYGRVMKGGIIFPNAEPFDTNIPGVKEFASSVGLEISPHDLLINLPRIPSQLIEGFFEGPVTFLLLWFLFKKIKKYDGFIFGVYVMLYAFFRFFIEYLREPDKELGFIITYKPITSLSEFSFLNISMGQILSLTLMLSGLIWIIVTKKIADKKIKNNTNLAYKN</sequence>
<feature type="chain" id="PRO_0000172563" description="Phosphatidylglycerol--prolipoprotein diacylglyceryl transferase">
    <location>
        <begin position="1"/>
        <end position="328"/>
    </location>
</feature>
<feature type="transmembrane region" description="Helical" evidence="1">
    <location>
        <begin position="15"/>
        <end position="35"/>
    </location>
</feature>
<feature type="transmembrane region" description="Helical" evidence="1">
    <location>
        <begin position="57"/>
        <end position="77"/>
    </location>
</feature>
<feature type="transmembrane region" description="Helical" evidence="1">
    <location>
        <begin position="106"/>
        <end position="126"/>
    </location>
</feature>
<feature type="transmembrane region" description="Helical" evidence="1">
    <location>
        <begin position="242"/>
        <end position="262"/>
    </location>
</feature>
<feature type="transmembrane region" description="Helical" evidence="1">
    <location>
        <begin position="289"/>
        <end position="309"/>
    </location>
</feature>
<feature type="binding site" evidence="1">
    <location>
        <position position="156"/>
    </location>
    <ligand>
        <name>a 1,2-diacyl-sn-glycero-3-phospho-(1'-sn-glycerol)</name>
        <dbReference type="ChEBI" id="CHEBI:64716"/>
    </ligand>
</feature>
<dbReference type="EC" id="2.5.1.145" evidence="1"/>
<dbReference type="EMBL" id="AE000783">
    <property type="protein sequence ID" value="AAC66751.1"/>
    <property type="molecule type" value="Genomic_DNA"/>
</dbReference>
<dbReference type="PIR" id="A70145">
    <property type="entry name" value="A70145"/>
</dbReference>
<dbReference type="RefSeq" id="NP_212496.1">
    <property type="nucleotide sequence ID" value="NC_001318.1"/>
</dbReference>
<dbReference type="RefSeq" id="WP_010889735.1">
    <property type="nucleotide sequence ID" value="NC_001318.1"/>
</dbReference>
<dbReference type="SMR" id="O51337"/>
<dbReference type="STRING" id="224326.BB_0362"/>
<dbReference type="PaxDb" id="224326-BB_0362"/>
<dbReference type="EnsemblBacteria" id="AAC66751">
    <property type="protein sequence ID" value="AAC66751"/>
    <property type="gene ID" value="BB_0362"/>
</dbReference>
<dbReference type="KEGG" id="bbu:BB_0362"/>
<dbReference type="PATRIC" id="fig|224326.49.peg.757"/>
<dbReference type="HOGENOM" id="CLU_013386_1_0_12"/>
<dbReference type="OrthoDB" id="871140at2"/>
<dbReference type="UniPathway" id="UPA00664"/>
<dbReference type="Proteomes" id="UP000001807">
    <property type="component" value="Chromosome"/>
</dbReference>
<dbReference type="GO" id="GO:0005886">
    <property type="term" value="C:plasma membrane"/>
    <property type="evidence" value="ECO:0007669"/>
    <property type="project" value="UniProtKB-SubCell"/>
</dbReference>
<dbReference type="GO" id="GO:0008961">
    <property type="term" value="F:phosphatidylglycerol-prolipoprotein diacylglyceryl transferase activity"/>
    <property type="evidence" value="ECO:0007669"/>
    <property type="project" value="UniProtKB-UniRule"/>
</dbReference>
<dbReference type="GO" id="GO:0042158">
    <property type="term" value="P:lipoprotein biosynthetic process"/>
    <property type="evidence" value="ECO:0007669"/>
    <property type="project" value="UniProtKB-UniRule"/>
</dbReference>
<dbReference type="HAMAP" id="MF_01147">
    <property type="entry name" value="Lgt"/>
    <property type="match status" value="1"/>
</dbReference>
<dbReference type="InterPro" id="IPR001640">
    <property type="entry name" value="Lgt"/>
</dbReference>
<dbReference type="NCBIfam" id="TIGR00544">
    <property type="entry name" value="lgt"/>
    <property type="match status" value="1"/>
</dbReference>
<dbReference type="PANTHER" id="PTHR30589:SF0">
    <property type="entry name" value="PHOSPHATIDYLGLYCEROL--PROLIPOPROTEIN DIACYLGLYCERYL TRANSFERASE"/>
    <property type="match status" value="1"/>
</dbReference>
<dbReference type="PANTHER" id="PTHR30589">
    <property type="entry name" value="PROLIPOPROTEIN DIACYLGLYCERYL TRANSFERASE"/>
    <property type="match status" value="1"/>
</dbReference>
<dbReference type="Pfam" id="PF01790">
    <property type="entry name" value="LGT"/>
    <property type="match status" value="1"/>
</dbReference>
<dbReference type="PROSITE" id="PS01311">
    <property type="entry name" value="LGT"/>
    <property type="match status" value="1"/>
</dbReference>
<keyword id="KW-0997">Cell inner membrane</keyword>
<keyword id="KW-1003">Cell membrane</keyword>
<keyword id="KW-0472">Membrane</keyword>
<keyword id="KW-1185">Reference proteome</keyword>
<keyword id="KW-0808">Transferase</keyword>
<keyword id="KW-0812">Transmembrane</keyword>
<keyword id="KW-1133">Transmembrane helix</keyword>
<protein>
    <recommendedName>
        <fullName evidence="1">Phosphatidylglycerol--prolipoprotein diacylglyceryl transferase</fullName>
        <ecNumber evidence="1">2.5.1.145</ecNumber>
    </recommendedName>
</protein>
<gene>
    <name evidence="1" type="primary">lgt</name>
    <name type="ordered locus">BB_0362</name>
</gene>
<organism>
    <name type="scientific">Borreliella burgdorferi (strain ATCC 35210 / DSM 4680 / CIP 102532 / B31)</name>
    <name type="common">Borrelia burgdorferi</name>
    <dbReference type="NCBI Taxonomy" id="224326"/>
    <lineage>
        <taxon>Bacteria</taxon>
        <taxon>Pseudomonadati</taxon>
        <taxon>Spirochaetota</taxon>
        <taxon>Spirochaetia</taxon>
        <taxon>Spirochaetales</taxon>
        <taxon>Borreliaceae</taxon>
        <taxon>Borreliella</taxon>
    </lineage>
</organism>
<evidence type="ECO:0000255" key="1">
    <source>
        <dbReference type="HAMAP-Rule" id="MF_01147"/>
    </source>
</evidence>
<name>LGT_BORBU</name>
<reference key="1">
    <citation type="journal article" date="1997" name="Nature">
        <title>Genomic sequence of a Lyme disease spirochaete, Borrelia burgdorferi.</title>
        <authorList>
            <person name="Fraser C.M."/>
            <person name="Casjens S."/>
            <person name="Huang W.M."/>
            <person name="Sutton G.G."/>
            <person name="Clayton R.A."/>
            <person name="Lathigra R."/>
            <person name="White O."/>
            <person name="Ketchum K.A."/>
            <person name="Dodson R.J."/>
            <person name="Hickey E.K."/>
            <person name="Gwinn M.L."/>
            <person name="Dougherty B.A."/>
            <person name="Tomb J.-F."/>
            <person name="Fleischmann R.D."/>
            <person name="Richardson D.L."/>
            <person name="Peterson J.D."/>
            <person name="Kerlavage A.R."/>
            <person name="Quackenbush J."/>
            <person name="Salzberg S.L."/>
            <person name="Hanson M."/>
            <person name="van Vugt R."/>
            <person name="Palmer N."/>
            <person name="Adams M.D."/>
            <person name="Gocayne J.D."/>
            <person name="Weidman J.F."/>
            <person name="Utterback T.R."/>
            <person name="Watthey L."/>
            <person name="McDonald L.A."/>
            <person name="Artiach P."/>
            <person name="Bowman C."/>
            <person name="Garland S.A."/>
            <person name="Fujii C."/>
            <person name="Cotton M.D."/>
            <person name="Horst K."/>
            <person name="Roberts K.M."/>
            <person name="Hatch B."/>
            <person name="Smith H.O."/>
            <person name="Venter J.C."/>
        </authorList>
    </citation>
    <scope>NUCLEOTIDE SEQUENCE [LARGE SCALE GENOMIC DNA]</scope>
    <source>
        <strain>ATCC 35210 / DSM 4680 / CIP 102532 / B31</strain>
    </source>
</reference>
<accession>O51337</accession>
<comment type="function">
    <text evidence="1">Catalyzes the transfer of the diacylglyceryl group from phosphatidylglycerol to the sulfhydryl group of the N-terminal cysteine of a prolipoprotein, the first step in the formation of mature lipoproteins.</text>
</comment>
<comment type="catalytic activity">
    <reaction evidence="1">
        <text>L-cysteinyl-[prolipoprotein] + a 1,2-diacyl-sn-glycero-3-phospho-(1'-sn-glycerol) = an S-1,2-diacyl-sn-glyceryl-L-cysteinyl-[prolipoprotein] + sn-glycerol 1-phosphate + H(+)</text>
        <dbReference type="Rhea" id="RHEA:56712"/>
        <dbReference type="Rhea" id="RHEA-COMP:14679"/>
        <dbReference type="Rhea" id="RHEA-COMP:14680"/>
        <dbReference type="ChEBI" id="CHEBI:15378"/>
        <dbReference type="ChEBI" id="CHEBI:29950"/>
        <dbReference type="ChEBI" id="CHEBI:57685"/>
        <dbReference type="ChEBI" id="CHEBI:64716"/>
        <dbReference type="ChEBI" id="CHEBI:140658"/>
        <dbReference type="EC" id="2.5.1.145"/>
    </reaction>
</comment>
<comment type="pathway">
    <text evidence="1">Protein modification; lipoprotein biosynthesis (diacylglyceryl transfer).</text>
</comment>
<comment type="subcellular location">
    <subcellularLocation>
        <location evidence="1">Cell inner membrane</location>
        <topology evidence="1">Multi-pass membrane protein</topology>
    </subcellularLocation>
</comment>
<comment type="similarity">
    <text evidence="1">Belongs to the Lgt family.</text>
</comment>
<proteinExistence type="inferred from homology"/>